<gene>
    <name evidence="44" type="primary">ELF3</name>
    <name evidence="35" type="synonym">ERT</name>
    <name evidence="33" type="synonym">ESX</name>
    <name type="synonym">JEN</name>
</gene>
<dbReference type="EMBL" id="U73843">
    <property type="protein sequence ID" value="AAB65823.1"/>
    <property type="molecule type" value="mRNA"/>
</dbReference>
<dbReference type="EMBL" id="U73844">
    <property type="protein sequence ID" value="AAB65824.1"/>
    <property type="molecule type" value="mRNA"/>
</dbReference>
<dbReference type="EMBL" id="U97156">
    <property type="protein sequence ID" value="AAC51884.1"/>
    <property type="molecule type" value="mRNA"/>
</dbReference>
<dbReference type="EMBL" id="U66894">
    <property type="protein sequence ID" value="AAB58075.1"/>
    <property type="molecule type" value="mRNA"/>
</dbReference>
<dbReference type="EMBL" id="AF016295">
    <property type="protein sequence ID" value="AAB96586.1"/>
    <property type="molecule type" value="mRNA"/>
</dbReference>
<dbReference type="EMBL" id="AF017307">
    <property type="protein sequence ID" value="AAB67238.1"/>
    <property type="molecule type" value="mRNA"/>
</dbReference>
<dbReference type="EMBL" id="AF110184">
    <property type="protein sequence ID" value="AAD45237.1"/>
    <property type="molecule type" value="Genomic_DNA"/>
</dbReference>
<dbReference type="EMBL" id="BN000001">
    <property type="protein sequence ID" value="CAD29859.1"/>
    <property type="molecule type" value="Genomic_DNA"/>
</dbReference>
<dbReference type="EMBL" id="AF517841">
    <property type="protein sequence ID" value="AAM70481.1"/>
    <property type="molecule type" value="mRNA"/>
</dbReference>
<dbReference type="EMBL" id="CR457106">
    <property type="protein sequence ID" value="CAG33387.1"/>
    <property type="molecule type" value="mRNA"/>
</dbReference>
<dbReference type="EMBL" id="AK312273">
    <property type="protein sequence ID" value="BAG35203.1"/>
    <property type="molecule type" value="mRNA"/>
</dbReference>
<dbReference type="EMBL" id="BX537368">
    <property type="protein sequence ID" value="CAD97611.1"/>
    <property type="molecule type" value="mRNA"/>
</dbReference>
<dbReference type="EMBL" id="AL691482">
    <property type="status" value="NOT_ANNOTATED_CDS"/>
    <property type="molecule type" value="Genomic_DNA"/>
</dbReference>
<dbReference type="EMBL" id="CH471067">
    <property type="protein sequence ID" value="EAW91389.1"/>
    <property type="molecule type" value="Genomic_DNA"/>
</dbReference>
<dbReference type="EMBL" id="BC003569">
    <property type="protein sequence ID" value="AAH03569.1"/>
    <property type="molecule type" value="mRNA"/>
</dbReference>
<dbReference type="CCDS" id="CCDS1419.1">
    <molecule id="P78545-1"/>
</dbReference>
<dbReference type="RefSeq" id="NP_001107781.1">
    <molecule id="P78545-1"/>
    <property type="nucleotide sequence ID" value="NM_001114309.2"/>
</dbReference>
<dbReference type="RefSeq" id="NP_004424.3">
    <molecule id="P78545-1"/>
    <property type="nucleotide sequence ID" value="NM_004433.4"/>
</dbReference>
<dbReference type="PDB" id="2E8P">
    <property type="method" value="NMR"/>
    <property type="chains" value="A=48-132"/>
</dbReference>
<dbReference type="PDBsum" id="2E8P"/>
<dbReference type="SMR" id="P78545"/>
<dbReference type="BioGRID" id="108314">
    <property type="interactions" value="53"/>
</dbReference>
<dbReference type="FunCoup" id="P78545">
    <property type="interactions" value="1729"/>
</dbReference>
<dbReference type="IntAct" id="P78545">
    <property type="interactions" value="26"/>
</dbReference>
<dbReference type="STRING" id="9606.ENSP00000352673"/>
<dbReference type="GlyGen" id="P78545">
    <property type="glycosylation" value="1 site, 1 O-linked glycan (1 site)"/>
</dbReference>
<dbReference type="iPTMnet" id="P78545"/>
<dbReference type="PhosphoSitePlus" id="P78545"/>
<dbReference type="BioMuta" id="ELF3"/>
<dbReference type="DMDM" id="74739735"/>
<dbReference type="jPOST" id="P78545"/>
<dbReference type="MassIVE" id="P78545"/>
<dbReference type="PaxDb" id="9606-ENSP00000352673"/>
<dbReference type="PeptideAtlas" id="P78545"/>
<dbReference type="ProteomicsDB" id="57646">
    <molecule id="P78545-1"/>
</dbReference>
<dbReference type="ProteomicsDB" id="57647">
    <molecule id="P78545-2"/>
</dbReference>
<dbReference type="Pumba" id="P78545"/>
<dbReference type="Antibodypedia" id="924">
    <property type="antibodies" value="466 antibodies from 37 providers"/>
</dbReference>
<dbReference type="DNASU" id="1999"/>
<dbReference type="Ensembl" id="ENST00000359651.7">
    <molecule id="P78545-1"/>
    <property type="protein sequence ID" value="ENSP00000352673.3"/>
    <property type="gene ID" value="ENSG00000163435.16"/>
</dbReference>
<dbReference type="Ensembl" id="ENST00000367283.7">
    <molecule id="P78545-1"/>
    <property type="protein sequence ID" value="ENSP00000356252.3"/>
    <property type="gene ID" value="ENSG00000163435.16"/>
</dbReference>
<dbReference type="Ensembl" id="ENST00000367284.10">
    <molecule id="P78545-1"/>
    <property type="protein sequence ID" value="ENSP00000356253.5"/>
    <property type="gene ID" value="ENSG00000163435.16"/>
</dbReference>
<dbReference type="GeneID" id="1999"/>
<dbReference type="KEGG" id="hsa:1999"/>
<dbReference type="MANE-Select" id="ENST00000367284.10">
    <property type="protein sequence ID" value="ENSP00000356253.5"/>
    <property type="RefSeq nucleotide sequence ID" value="NM_004433.5"/>
    <property type="RefSeq protein sequence ID" value="NP_004424.3"/>
</dbReference>
<dbReference type="UCSC" id="uc001gxg.5">
    <molecule id="P78545-1"/>
    <property type="organism name" value="human"/>
</dbReference>
<dbReference type="AGR" id="HGNC:3318"/>
<dbReference type="CTD" id="1999"/>
<dbReference type="DisGeNET" id="1999"/>
<dbReference type="GeneCards" id="ELF3"/>
<dbReference type="HGNC" id="HGNC:3318">
    <property type="gene designation" value="ELF3"/>
</dbReference>
<dbReference type="HPA" id="ENSG00000163435">
    <property type="expression patterns" value="Tissue enhanced (esophagus)"/>
</dbReference>
<dbReference type="MIM" id="602191">
    <property type="type" value="gene"/>
</dbReference>
<dbReference type="neXtProt" id="NX_P78545"/>
<dbReference type="OpenTargets" id="ENSG00000163435"/>
<dbReference type="PharmGKB" id="PA27746"/>
<dbReference type="VEuPathDB" id="HostDB:ENSG00000163435"/>
<dbReference type="eggNOG" id="KOG3804">
    <property type="taxonomic scope" value="Eukaryota"/>
</dbReference>
<dbReference type="GeneTree" id="ENSGT00940000158955"/>
<dbReference type="HOGENOM" id="CLU_048172_0_0_1"/>
<dbReference type="InParanoid" id="P78545"/>
<dbReference type="OMA" id="CNCAPEE"/>
<dbReference type="OrthoDB" id="5961210at2759"/>
<dbReference type="PAN-GO" id="P78545">
    <property type="GO annotations" value="4 GO annotations based on evolutionary models"/>
</dbReference>
<dbReference type="PhylomeDB" id="P78545"/>
<dbReference type="TreeFam" id="TF318679"/>
<dbReference type="PathwayCommons" id="P78545"/>
<dbReference type="Reactome" id="R-HSA-1912408">
    <property type="pathway name" value="Pre-NOTCH Transcription and Translation"/>
</dbReference>
<dbReference type="SignaLink" id="P78545"/>
<dbReference type="SIGNOR" id="P78545"/>
<dbReference type="BioGRID-ORCS" id="1999">
    <property type="hits" value="34 hits in 1175 CRISPR screens"/>
</dbReference>
<dbReference type="ChiTaRS" id="ELF3">
    <property type="organism name" value="human"/>
</dbReference>
<dbReference type="EvolutionaryTrace" id="P78545"/>
<dbReference type="GenomeRNAi" id="1999"/>
<dbReference type="Pharos" id="P78545">
    <property type="development level" value="Tbio"/>
</dbReference>
<dbReference type="PRO" id="PR:P78545"/>
<dbReference type="Proteomes" id="UP000005640">
    <property type="component" value="Chromosome 1"/>
</dbReference>
<dbReference type="RNAct" id="P78545">
    <property type="molecule type" value="protein"/>
</dbReference>
<dbReference type="Bgee" id="ENSG00000163435">
    <property type="expression patterns" value="Expressed in lower esophagus mucosa and 134 other cell types or tissues"/>
</dbReference>
<dbReference type="ExpressionAtlas" id="P78545">
    <property type="expression patterns" value="baseline and differential"/>
</dbReference>
<dbReference type="GO" id="GO:0000785">
    <property type="term" value="C:chromatin"/>
    <property type="evidence" value="ECO:0000247"/>
    <property type="project" value="NTNU_SB"/>
</dbReference>
<dbReference type="GO" id="GO:0005829">
    <property type="term" value="C:cytosol"/>
    <property type="evidence" value="ECO:0000314"/>
    <property type="project" value="HPA"/>
</dbReference>
<dbReference type="GO" id="GO:0005794">
    <property type="term" value="C:Golgi apparatus"/>
    <property type="evidence" value="ECO:0000314"/>
    <property type="project" value="HPA"/>
</dbReference>
<dbReference type="GO" id="GO:0005654">
    <property type="term" value="C:nucleoplasm"/>
    <property type="evidence" value="ECO:0000314"/>
    <property type="project" value="HPA"/>
</dbReference>
<dbReference type="GO" id="GO:0005634">
    <property type="term" value="C:nucleus"/>
    <property type="evidence" value="ECO:0000318"/>
    <property type="project" value="GO_Central"/>
</dbReference>
<dbReference type="GO" id="GO:0001228">
    <property type="term" value="F:DNA-binding transcription activator activity, RNA polymerase II-specific"/>
    <property type="evidence" value="ECO:0000314"/>
    <property type="project" value="GO_Central"/>
</dbReference>
<dbReference type="GO" id="GO:0003700">
    <property type="term" value="F:DNA-binding transcription factor activity"/>
    <property type="evidence" value="ECO:0000304"/>
    <property type="project" value="ProtInc"/>
</dbReference>
<dbReference type="GO" id="GO:0000981">
    <property type="term" value="F:DNA-binding transcription factor activity, RNA polymerase II-specific"/>
    <property type="evidence" value="ECO:0000247"/>
    <property type="project" value="NTNU_SB"/>
</dbReference>
<dbReference type="GO" id="GO:0000978">
    <property type="term" value="F:RNA polymerase II cis-regulatory region sequence-specific DNA binding"/>
    <property type="evidence" value="ECO:0007669"/>
    <property type="project" value="Ensembl"/>
</dbReference>
<dbReference type="GO" id="GO:1990837">
    <property type="term" value="F:sequence-specific double-stranded DNA binding"/>
    <property type="evidence" value="ECO:0000314"/>
    <property type="project" value="ARUK-UCL"/>
</dbReference>
<dbReference type="GO" id="GO:0001824">
    <property type="term" value="P:blastocyst development"/>
    <property type="evidence" value="ECO:0007669"/>
    <property type="project" value="Ensembl"/>
</dbReference>
<dbReference type="GO" id="GO:0030154">
    <property type="term" value="P:cell differentiation"/>
    <property type="evidence" value="ECO:0000318"/>
    <property type="project" value="GO_Central"/>
</dbReference>
<dbReference type="GO" id="GO:0030198">
    <property type="term" value="P:extracellular matrix organization"/>
    <property type="evidence" value="ECO:0007669"/>
    <property type="project" value="Ensembl"/>
</dbReference>
<dbReference type="GO" id="GO:0006954">
    <property type="term" value="P:inflammatory response"/>
    <property type="evidence" value="ECO:0000270"/>
    <property type="project" value="UniProtKB"/>
</dbReference>
<dbReference type="GO" id="GO:0060056">
    <property type="term" value="P:mammary gland involution"/>
    <property type="evidence" value="ECO:0000250"/>
    <property type="project" value="UniProtKB"/>
</dbReference>
<dbReference type="GO" id="GO:0045892">
    <property type="term" value="P:negative regulation of DNA-templated transcription"/>
    <property type="evidence" value="ECO:0000314"/>
    <property type="project" value="UniProtKB"/>
</dbReference>
<dbReference type="GO" id="GO:0045944">
    <property type="term" value="P:positive regulation of transcription by RNA polymerase II"/>
    <property type="evidence" value="ECO:0000314"/>
    <property type="project" value="GO_Central"/>
</dbReference>
<dbReference type="GO" id="GO:0006357">
    <property type="term" value="P:regulation of transcription by RNA polymerase II"/>
    <property type="evidence" value="ECO:0000318"/>
    <property type="project" value="GO_Central"/>
</dbReference>
<dbReference type="CDD" id="cd08537">
    <property type="entry name" value="SAM_PNT-ESE-1-like"/>
    <property type="match status" value="1"/>
</dbReference>
<dbReference type="FunFam" id="1.10.10.10:FF:000136">
    <property type="entry name" value="ETS homologous factor isoform X1"/>
    <property type="match status" value="1"/>
</dbReference>
<dbReference type="FunFam" id="1.10.150.50:FF:000063">
    <property type="entry name" value="ETS-related transcription factor Elf-3 isoform X1"/>
    <property type="match status" value="1"/>
</dbReference>
<dbReference type="Gene3D" id="1.10.150.50">
    <property type="entry name" value="Transcription Factor, Ets-1"/>
    <property type="match status" value="1"/>
</dbReference>
<dbReference type="Gene3D" id="1.10.10.10">
    <property type="entry name" value="Winged helix-like DNA-binding domain superfamily/Winged helix DNA-binding domain"/>
    <property type="match status" value="1"/>
</dbReference>
<dbReference type="InterPro" id="IPR042693">
    <property type="entry name" value="Elf-3_PNT"/>
</dbReference>
<dbReference type="InterPro" id="IPR000418">
    <property type="entry name" value="Ets_dom"/>
</dbReference>
<dbReference type="InterPro" id="IPR046328">
    <property type="entry name" value="ETS_fam"/>
</dbReference>
<dbReference type="InterPro" id="IPR003118">
    <property type="entry name" value="Pointed_dom"/>
</dbReference>
<dbReference type="InterPro" id="IPR013761">
    <property type="entry name" value="SAM/pointed_sf"/>
</dbReference>
<dbReference type="InterPro" id="IPR036388">
    <property type="entry name" value="WH-like_DNA-bd_sf"/>
</dbReference>
<dbReference type="InterPro" id="IPR036390">
    <property type="entry name" value="WH_DNA-bd_sf"/>
</dbReference>
<dbReference type="PANTHER" id="PTHR11849">
    <property type="entry name" value="ETS"/>
    <property type="match status" value="1"/>
</dbReference>
<dbReference type="PANTHER" id="PTHR11849:SF13">
    <property type="entry name" value="ETS-RELATED TRANSCRIPTION FACTOR ELF-3"/>
    <property type="match status" value="1"/>
</dbReference>
<dbReference type="Pfam" id="PF00178">
    <property type="entry name" value="Ets"/>
    <property type="match status" value="1"/>
</dbReference>
<dbReference type="Pfam" id="PF02198">
    <property type="entry name" value="SAM_PNT"/>
    <property type="match status" value="1"/>
</dbReference>
<dbReference type="PRINTS" id="PR00454">
    <property type="entry name" value="ETSDOMAIN"/>
</dbReference>
<dbReference type="SMART" id="SM00413">
    <property type="entry name" value="ETS"/>
    <property type="match status" value="1"/>
</dbReference>
<dbReference type="SMART" id="SM00251">
    <property type="entry name" value="SAM_PNT"/>
    <property type="match status" value="1"/>
</dbReference>
<dbReference type="SUPFAM" id="SSF47769">
    <property type="entry name" value="SAM/Pointed domain"/>
    <property type="match status" value="1"/>
</dbReference>
<dbReference type="SUPFAM" id="SSF46785">
    <property type="entry name" value="Winged helix' DNA-binding domain"/>
    <property type="match status" value="1"/>
</dbReference>
<dbReference type="PROSITE" id="PS50061">
    <property type="entry name" value="ETS_DOMAIN_3"/>
    <property type="match status" value="1"/>
</dbReference>
<dbReference type="PROSITE" id="PS51433">
    <property type="entry name" value="PNT"/>
    <property type="match status" value="1"/>
</dbReference>
<sequence length="371" mass="41454">MAATCEISNIFSNYFSAMYSSEDSTLASVPPAATFGADDLVLTLSNPQMSLEGTEKASWLGEQPQFWSKTQVLDWISYQVEKNKYDASAIDFSRCDMDGATLCNCALEELRLVFGPLGDQLHAQLRDLTSSSSDELSWIIELLEKDGMAFQEALDPGPFDQGSPFAQELLDDGQQASPYHPGSCGAGAPSPGSSDVSTAGTGASRSSHSSDSGGSDVDLDPTDGKLFPSDGFRDCKKGDPKHGKRKRGRPRKLSKEYWDCLEGKKSKHAPRGTHLWEFIRDILIHPELNEGLMKWENRHEGVFKFLRSEAVAQLWGQKKKNSNMTYEKLSRAMRYYYKREILERVDGRRLVYKFGKNSSGWKEEEVLQSRN</sequence>
<accession>P78545</accession>
<accession>B2R5Q6</accession>
<accession>Q6IAP8</accession>
<accession>Q7RU03</accession>
<accession>Q7Z3X2</accession>
<accession>Q8NFG2</accession>
<accession>Q99718</accession>
<comment type="function">
    <text evidence="1 6 7 8 9 10 12 13 14 15 16 17 19 20 21 22 23 26 27 28 29 30">Transcriptional activator that binds and transactivates ETS sequences containing the consensus nucleotide core sequence GGA[AT]. Acts synergistically with POU2F3 to transactivate the SPRR2A promoter and with RUNX1 to transactivate the ANGPT1 promoter. Also transactivates collagenase, CCL20, CLND7, FLG, KRT8, NOS2, PTGS2, SPRR2B, TGFBR2 and TGM3 promoters. Represses KRT4 promoter activity. Involved in mediating vascular inflammation. May play an important role in epithelial cell differentiation and tumorigenesis. May be a critical downstream effector of the ERBB2 signaling pathway. May be associated with mammary gland development and involution. Plays an important role in the regulation of transcription with TATA-less promoters in preimplantation embryos, which is essential in preimplantation development (By similarity).</text>
</comment>
<comment type="subunit">
    <text evidence="6 13 19 23 25">Interacts with TBP. Interacts with CREBBP and EP300; these act as transcriptional coactivators of ELF3 and positively modulate its function. Interacts with XRCC5/KU86 and XRCC6/KU70; these inhibit the ability of ELF3 to bind DNA and negatively modulate its transcriptional activity. Associated with CLND7 and POU2F3. Interacts with ZNF768 (PubMed:30476274).</text>
</comment>
<comment type="interaction">
    <interactant intactId="EBI-1057285">
        <id>P78545</id>
    </interactant>
    <interactant intactId="EBI-2007911">
        <id>Q16236</id>
        <label>NFE2L2</label>
    </interactant>
    <organismsDiffer>false</organismsDiffer>
    <experiments>5</experiments>
</comment>
<comment type="interaction">
    <interactant intactId="EBI-1057285">
        <id>P78545</id>
    </interactant>
    <interactant intactId="EBI-286199">
        <id>P41743</id>
        <label>PRKCI</label>
    </interactant>
    <organismsDiffer>false</organismsDiffer>
    <experiments>2</experiments>
</comment>
<comment type="subcellular location">
    <subcellularLocation>
        <location evidence="6 20 23">Cytoplasm</location>
    </subcellularLocation>
    <subcellularLocation>
        <location evidence="3 6 20 23">Nucleus</location>
    </subcellularLocation>
    <text evidence="6 20 23">Localizes to the cytoplasm where it has been shown to transform MCF-12A mammary epithelial cells via a novel cytoplasmic mechanism. Also transiently expressed and localized to the nucleus where it induces apoptosis in non-transformed breast epithelial cells MCF-10A and MCF-12A via a transcription-dependent mechanism.</text>
</comment>
<comment type="alternative products">
    <event type="alternative splicing"/>
    <isoform>
        <id>P78545-1</id>
        <name evidence="27">1</name>
        <name evidence="27">ESE-1b</name>
        <sequence type="displayed"/>
    </isoform>
    <isoform>
        <id>P78545-2</id>
        <name evidence="27">2</name>
        <name evidence="27">ESE-1a</name>
        <sequence type="described" ref="VSP_052433"/>
    </isoform>
    <text evidence="27">Additional isoforms may exist.</text>
</comment>
<comment type="tissue specificity">
    <text evidence="26 27 28 29">Expressed exclusively in tissues containing a high content of terminally differentiated epithelial cells including mammary gland, colon, trachea, kidney, prostate, uterus, stomach and skin.</text>
</comment>
<comment type="induction">
    <text evidence="11 14 22">Transcriptionally regulated by ERBB2 receptor signaling in breast cancer epithelial cells. Up-regulated by phorbol 12-myristate 13-acetate (PMA) in bronchial epithelial cells. By retinoic acid in MCF-7 mammary epithelial cells (at protein level).</text>
</comment>
<comment type="domain">
    <text evidence="24">The 9aaTAD motif is a transactivation domain present in a large number of yeast and animal transcription factors.</text>
</comment>
<comment type="similarity">
    <text evidence="2">Belongs to the ETS family.</text>
</comment>
<feature type="chain" id="PRO_0000287681" description="ETS-related transcription factor Elf-3">
    <location>
        <begin position="1"/>
        <end position="371"/>
    </location>
</feature>
<feature type="domain" description="PNT" evidence="4">
    <location>
        <begin position="46"/>
        <end position="132"/>
    </location>
</feature>
<feature type="DNA-binding region" description="ETS" evidence="3">
    <location>
        <begin position="273"/>
        <end position="355"/>
    </location>
</feature>
<feature type="region of interest" description="Disordered" evidence="5">
    <location>
        <begin position="173"/>
        <end position="251"/>
    </location>
</feature>
<feature type="short sequence motif" description="9aaTAD">
    <location>
        <begin position="137"/>
        <end position="145"/>
    </location>
</feature>
<feature type="compositionally biased region" description="Low complexity" evidence="5">
    <location>
        <begin position="181"/>
        <end position="216"/>
    </location>
</feature>
<feature type="compositionally biased region" description="Basic and acidic residues" evidence="5">
    <location>
        <begin position="231"/>
        <end position="241"/>
    </location>
</feature>
<feature type="compositionally biased region" description="Basic residues" evidence="5">
    <location>
        <begin position="242"/>
        <end position="251"/>
    </location>
</feature>
<feature type="splice variant" id="VSP_052433" description="In isoform 2." evidence="31">
    <location>
        <begin position="173"/>
        <end position="195"/>
    </location>
</feature>
<feature type="sequence variant" id="VAR_048945" description="In dbSNP:rs1135542.">
    <original>Q</original>
    <variation>K</variation>
    <location>
        <position position="317"/>
    </location>
</feature>
<feature type="mutagenesis site" description="No effect on transcriptional repression on KRT4 promoter." evidence="8">
    <original>RGRP</original>
    <variation>AAAA</variation>
    <location>
        <begin position="247"/>
        <end position="250"/>
    </location>
</feature>
<feature type="mutagenesis site" description="Partially abrogates repressive effect on the KRT4 promoter; when associated with A-319." evidence="8">
    <original>W</original>
    <variation>A</variation>
    <location>
        <position position="315"/>
    </location>
</feature>
<feature type="mutagenesis site" description="Partially abrogates repressive effect on the KRT4 promoter; when associated with A-315." evidence="8">
    <original>K</original>
    <variation>A</variation>
    <location>
        <position position="319"/>
    </location>
</feature>
<feature type="mutagenesis site" description="Partially abrogates repressive effect on the KRT4 promoter." evidence="8">
    <original>RYYY</original>
    <variation>AAAA</variation>
    <location>
        <begin position="334"/>
        <end position="337"/>
    </location>
</feature>
<feature type="sequence conflict" description="In Ref. 8; AAM70481." evidence="32" ref="8">
    <original>A</original>
    <variation>T</variation>
    <location>
        <position position="3"/>
    </location>
</feature>
<feature type="sequence conflict" description="In Ref. 7; CAD29859." evidence="32" ref="7">
    <original>EK</original>
    <variation>GE</variation>
    <location>
        <begin position="55"/>
        <end position="56"/>
    </location>
</feature>
<feature type="sequence conflict" description="In Ref. 8; AAM70481." evidence="32" ref="8">
    <original>S</original>
    <variation>L</variation>
    <location>
        <position position="68"/>
    </location>
</feature>
<feature type="sequence conflict" description="In Ref. 7; CAD29859." evidence="32" ref="7">
    <original>TS</original>
    <variation>SA</variation>
    <location>
        <begin position="129"/>
        <end position="130"/>
    </location>
</feature>
<feature type="sequence conflict" description="In Ref. 8; AAM70481." evidence="32" ref="8">
    <original>D</original>
    <variation>Y</variation>
    <location>
        <position position="134"/>
    </location>
</feature>
<feature type="sequence conflict" description="In Ref. 7; CAD29859." evidence="32" ref="7">
    <original>DQ</original>
    <variation>GE</variation>
    <location>
        <begin position="160"/>
        <end position="161"/>
    </location>
</feature>
<feature type="sequence conflict" description="In Ref. 7; CAD29859." evidence="32" ref="7">
    <original>T</original>
    <variation>A</variation>
    <location>
        <position position="201"/>
    </location>
</feature>
<feature type="sequence conflict" description="In Ref. 9; CAG33387." evidence="32" ref="9">
    <original>H</original>
    <variation>L</variation>
    <location>
        <position position="242"/>
    </location>
</feature>
<feature type="sequence conflict" description="In Ref. 11; CAD97611." evidence="32" ref="11">
    <original>K</original>
    <variation>E</variation>
    <location>
        <position position="244"/>
    </location>
</feature>
<feature type="sequence conflict" description="In Ref. 8; AAM70481." evidence="32" ref="8">
    <original>Y</original>
    <variation>C</variation>
    <location>
        <position position="257"/>
    </location>
</feature>
<feature type="sequence conflict" description="In Ref. 7; CAD29859." evidence="32" ref="7">
    <original>A</original>
    <variation>G</variation>
    <location>
        <position position="269"/>
    </location>
</feature>
<feature type="strand" evidence="45">
    <location>
        <begin position="60"/>
        <end position="62"/>
    </location>
</feature>
<feature type="helix" evidence="45">
    <location>
        <begin position="64"/>
        <end position="66"/>
    </location>
</feature>
<feature type="helix" evidence="45">
    <location>
        <begin position="69"/>
        <end position="82"/>
    </location>
</feature>
<feature type="turn" evidence="45">
    <location>
        <begin position="92"/>
        <end position="94"/>
    </location>
</feature>
<feature type="helix" evidence="45">
    <location>
        <begin position="100"/>
        <end position="104"/>
    </location>
</feature>
<feature type="helix" evidence="45">
    <location>
        <begin position="107"/>
        <end position="113"/>
    </location>
</feature>
<feature type="helix" evidence="45">
    <location>
        <begin position="115"/>
        <end position="117"/>
    </location>
</feature>
<feature type="helix" evidence="45">
    <location>
        <begin position="118"/>
        <end position="130"/>
    </location>
</feature>
<organism>
    <name type="scientific">Homo sapiens</name>
    <name type="common">Human</name>
    <dbReference type="NCBI Taxonomy" id="9606"/>
    <lineage>
        <taxon>Eukaryota</taxon>
        <taxon>Metazoa</taxon>
        <taxon>Chordata</taxon>
        <taxon>Craniata</taxon>
        <taxon>Vertebrata</taxon>
        <taxon>Euteleostomi</taxon>
        <taxon>Mammalia</taxon>
        <taxon>Eutheria</taxon>
        <taxon>Euarchontoglires</taxon>
        <taxon>Primates</taxon>
        <taxon>Haplorrhini</taxon>
        <taxon>Catarrhini</taxon>
        <taxon>Hominidae</taxon>
        <taxon>Homo</taxon>
    </lineage>
</organism>
<protein>
    <recommendedName>
        <fullName>ETS-related transcription factor Elf-3</fullName>
    </recommendedName>
    <alternativeName>
        <fullName>E74-like factor 3</fullName>
    </alternativeName>
    <alternativeName>
        <fullName>Epithelial-restricted with serine box</fullName>
    </alternativeName>
    <alternativeName>
        <fullName>Epithelium-restricted Ets protein ESX</fullName>
    </alternativeName>
    <alternativeName>
        <fullName>Epithelium-specific Ets transcription factor 1</fullName>
        <shortName>ESE-1</shortName>
    </alternativeName>
</protein>
<proteinExistence type="evidence at protein level"/>
<keyword id="KW-0002">3D-structure</keyword>
<keyword id="KW-0010">Activator</keyword>
<keyword id="KW-0025">Alternative splicing</keyword>
<keyword id="KW-0963">Cytoplasm</keyword>
<keyword id="KW-0217">Developmental protein</keyword>
<keyword id="KW-0221">Differentiation</keyword>
<keyword id="KW-0238">DNA-binding</keyword>
<keyword id="KW-0395">Inflammatory response</keyword>
<keyword id="KW-0539">Nucleus</keyword>
<keyword id="KW-1267">Proteomics identification</keyword>
<keyword id="KW-1185">Reference proteome</keyword>
<keyword id="KW-0678">Repressor</keyword>
<keyword id="KW-0804">Transcription</keyword>
<keyword id="KW-0805">Transcription regulation</keyword>
<reference evidence="32 34" key="1">
    <citation type="journal article" date="1997" name="Mol. Cell. Biol.">
        <title>Isolation and characterization of a novel epithelium-specific transcription factor, ESE-1, a member of the ets family.</title>
        <authorList>
            <person name="Oettgen P."/>
            <person name="Alani R.M."/>
            <person name="Barcinski M.A."/>
            <person name="Brown L."/>
            <person name="Akbarali Y."/>
            <person name="Boltax J."/>
            <person name="Kunsch C."/>
            <person name="Munger K."/>
            <person name="Libermann T.A."/>
        </authorList>
    </citation>
    <scope>NUCLEOTIDE SEQUENCE [MRNA] (ISOFORMS 1 AND 2)</scope>
    <scope>FUNCTION</scope>
    <scope>ALTERNATIVE SPLICING</scope>
    <scope>TISSUE SPECIFICITY</scope>
</reference>
<reference evidence="32 37" key="2">
    <citation type="journal article" date="1997" name="Nucleic Acids Res.">
        <title>The expression of a novel, epithelium-specific ets transcription factor is restricted to the most differentiated layers in the epidermis.</title>
        <authorList>
            <person name="Andreoli J.M."/>
            <person name="Jang S.-I."/>
            <person name="Chung E."/>
            <person name="Coticchia C.M."/>
            <person name="Steinert P.M."/>
            <person name="Markova N.G."/>
        </authorList>
    </citation>
    <scope>NUCLEOTIDE SEQUENCE [MRNA] (ISOFORM 1)</scope>
    <scope>FUNCTION</scope>
    <scope>TISSUE SPECIFICITY</scope>
</reference>
<reference evidence="32 33" key="3">
    <citation type="journal article" date="1997" name="Oncogene">
        <title>ESX: a structurally unique Ets overexpressed early during human breast tumorigenesis.</title>
        <authorList>
            <person name="Chang C.-H."/>
            <person name="Scott G.K."/>
            <person name="Kuo W.-L."/>
            <person name="Xiong X."/>
            <person name="Suzdaltseva Y."/>
            <person name="Park J.W."/>
            <person name="Sayre P."/>
            <person name="Erny K."/>
            <person name="Collins C."/>
            <person name="Gray J.W."/>
            <person name="Benz C.C."/>
        </authorList>
    </citation>
    <scope>NUCLEOTIDE SEQUENCE [MRNA] (ISOFORM 1)</scope>
    <scope>FUNCTION</scope>
    <scope>TISSUE SPECIFICITY</scope>
    <source>
        <tissue evidence="33">Placenta</tissue>
    </source>
</reference>
<reference evidence="32 36" key="4">
    <citation type="journal article" date="1997" name="Oncogene">
        <title>A novel epithelial-expressed ETS gene, ELF3: human and murine cDNA sequences, murine genomic organization, human mapping to 1q32.2 and expression in tissues and cancer.</title>
        <authorList>
            <person name="Tymms M.J."/>
            <person name="Ng A.Y.N."/>
            <person name="Thomas R.S."/>
            <person name="Schutte B.C."/>
            <person name="Zhou J."/>
            <person name="Eyre H.J."/>
            <person name="Sutherland G.R."/>
            <person name="Seth A."/>
            <person name="Rosenberg M."/>
            <person name="Papas T."/>
            <person name="Debouck C."/>
            <person name="Kola I."/>
        </authorList>
    </citation>
    <scope>NUCLEOTIDE SEQUENCE [MRNA] (ISOFORM 1)</scope>
    <scope>FUNCTION</scope>
    <scope>TISSUE SPECIFICITY</scope>
    <source>
        <tissue evidence="36">Fetal lung</tissue>
    </source>
</reference>
<reference evidence="32 35" key="5">
    <citation type="journal article" date="1998" name="J. Biol. Chem.">
        <title>A novel ets-related transcription factor, ERT/ESX/ESE-1, regulates expression of the transforming growth factor-beta type II receptor.</title>
        <authorList>
            <person name="Choi S.-G."/>
            <person name="Yi Y."/>
            <person name="Kim Y.-S."/>
            <person name="Kato M."/>
            <person name="Chang J."/>
            <person name="Chung H.-W."/>
            <person name="Hahm K.-B."/>
            <person name="Yang H.-K."/>
            <person name="Rhee H.H."/>
            <person name="Bang Y.-J."/>
            <person name="Kim S.-J."/>
        </authorList>
    </citation>
    <scope>NUCLEOTIDE SEQUENCE [MRNA] (ISOFORM 1)</scope>
    <scope>FUNCTION</scope>
    <source>
        <tissue evidence="35">Placenta</tissue>
    </source>
</reference>
<reference evidence="32 38" key="6">
    <citation type="journal article" date="1999" name="Oncogene">
        <title>Exon 4-encoded acidic domain in the epithelium-restricted Ets factor, ESX, confers potent transactivating capacity and binds to TATA-binding protein (TBP).</title>
        <authorList>
            <person name="Chang C.-H."/>
            <person name="Scott G.K."/>
            <person name="Baldwin M.A."/>
            <person name="Benz C.C."/>
        </authorList>
    </citation>
    <scope>NUCLEOTIDE SEQUENCE [GENOMIC DNA] (ISOFORM 1)</scope>
    <scope>FUNCTION</scope>
    <scope>INTERACTION WITH TBP</scope>
    <scope>SUBCELLULAR LOCATION</scope>
</reference>
<reference evidence="32 42" key="7">
    <citation type="journal article" date="2002" name="Gene">
        <title>Human aminopeptidase B (rnpep) on chromosome 1q32.2: complementary DNA, genomic structure and expression.</title>
        <authorList>
            <person name="Piesse C."/>
            <person name="Tymms M."/>
            <person name="Garrafa E."/>
            <person name="Gouzy C."/>
            <person name="Lacasa M."/>
            <person name="Cadel S."/>
            <person name="Cohen P."/>
            <person name="Foulon T."/>
        </authorList>
    </citation>
    <scope>NUCLEOTIDE SEQUENCE [GENOMIC DNA] (ISOFORM 1)</scope>
</reference>
<reference evidence="32 40" key="8">
    <citation type="journal article" date="2004" name="Breast Cancer Res. Treat.">
        <title>Partially unspliced and fully spliced ELF3 mRNA, including a new Alu element in human breast cancer.</title>
        <authorList>
            <person name="Kaplan M.H."/>
            <person name="Wang X.P."/>
            <person name="Xu H.P."/>
            <person name="Dosik M.H."/>
        </authorList>
    </citation>
    <scope>NUCLEOTIDE SEQUENCE [MRNA] (ISOFORM 1)</scope>
    <scope>ALTERNATIVE SPLICING</scope>
    <source>
        <tissue evidence="18">Mammary cancer</tissue>
    </source>
</reference>
<reference evidence="32 43" key="9">
    <citation type="submission" date="2004-06" db="EMBL/GenBank/DDBJ databases">
        <title>Cloning of human full open reading frames in Gateway(TM) system entry vector (pDONR201).</title>
        <authorList>
            <person name="Ebert L."/>
            <person name="Schick M."/>
            <person name="Neubert P."/>
            <person name="Schatten R."/>
            <person name="Henze S."/>
            <person name="Korn B."/>
        </authorList>
    </citation>
    <scope>NUCLEOTIDE SEQUENCE [LARGE SCALE MRNA] (ISOFORM 1)</scope>
</reference>
<reference key="10">
    <citation type="journal article" date="2004" name="Nat. Genet.">
        <title>Complete sequencing and characterization of 21,243 full-length human cDNAs.</title>
        <authorList>
            <person name="Ota T."/>
            <person name="Suzuki Y."/>
            <person name="Nishikawa T."/>
            <person name="Otsuki T."/>
            <person name="Sugiyama T."/>
            <person name="Irie R."/>
            <person name="Wakamatsu A."/>
            <person name="Hayashi K."/>
            <person name="Sato H."/>
            <person name="Nagai K."/>
            <person name="Kimura K."/>
            <person name="Makita H."/>
            <person name="Sekine M."/>
            <person name="Obayashi M."/>
            <person name="Nishi T."/>
            <person name="Shibahara T."/>
            <person name="Tanaka T."/>
            <person name="Ishii S."/>
            <person name="Yamamoto J."/>
            <person name="Saito K."/>
            <person name="Kawai Y."/>
            <person name="Isono Y."/>
            <person name="Nakamura Y."/>
            <person name="Nagahari K."/>
            <person name="Murakami K."/>
            <person name="Yasuda T."/>
            <person name="Iwayanagi T."/>
            <person name="Wagatsuma M."/>
            <person name="Shiratori A."/>
            <person name="Sudo H."/>
            <person name="Hosoiri T."/>
            <person name="Kaku Y."/>
            <person name="Kodaira H."/>
            <person name="Kondo H."/>
            <person name="Sugawara M."/>
            <person name="Takahashi M."/>
            <person name="Kanda K."/>
            <person name="Yokoi T."/>
            <person name="Furuya T."/>
            <person name="Kikkawa E."/>
            <person name="Omura Y."/>
            <person name="Abe K."/>
            <person name="Kamihara K."/>
            <person name="Katsuta N."/>
            <person name="Sato K."/>
            <person name="Tanikawa M."/>
            <person name="Yamazaki M."/>
            <person name="Ninomiya K."/>
            <person name="Ishibashi T."/>
            <person name="Yamashita H."/>
            <person name="Murakawa K."/>
            <person name="Fujimori K."/>
            <person name="Tanai H."/>
            <person name="Kimata M."/>
            <person name="Watanabe M."/>
            <person name="Hiraoka S."/>
            <person name="Chiba Y."/>
            <person name="Ishida S."/>
            <person name="Ono Y."/>
            <person name="Takiguchi S."/>
            <person name="Watanabe S."/>
            <person name="Yosida M."/>
            <person name="Hotuta T."/>
            <person name="Kusano J."/>
            <person name="Kanehori K."/>
            <person name="Takahashi-Fujii A."/>
            <person name="Hara H."/>
            <person name="Tanase T.-O."/>
            <person name="Nomura Y."/>
            <person name="Togiya S."/>
            <person name="Komai F."/>
            <person name="Hara R."/>
            <person name="Takeuchi K."/>
            <person name="Arita M."/>
            <person name="Imose N."/>
            <person name="Musashino K."/>
            <person name="Yuuki H."/>
            <person name="Oshima A."/>
            <person name="Sasaki N."/>
            <person name="Aotsuka S."/>
            <person name="Yoshikawa Y."/>
            <person name="Matsunawa H."/>
            <person name="Ichihara T."/>
            <person name="Shiohata N."/>
            <person name="Sano S."/>
            <person name="Moriya S."/>
            <person name="Momiyama H."/>
            <person name="Satoh N."/>
            <person name="Takami S."/>
            <person name="Terashima Y."/>
            <person name="Suzuki O."/>
            <person name="Nakagawa S."/>
            <person name="Senoh A."/>
            <person name="Mizoguchi H."/>
            <person name="Goto Y."/>
            <person name="Shimizu F."/>
            <person name="Wakebe H."/>
            <person name="Hishigaki H."/>
            <person name="Watanabe T."/>
            <person name="Sugiyama A."/>
            <person name="Takemoto M."/>
            <person name="Kawakami B."/>
            <person name="Yamazaki M."/>
            <person name="Watanabe K."/>
            <person name="Kumagai A."/>
            <person name="Itakura S."/>
            <person name="Fukuzumi Y."/>
            <person name="Fujimori Y."/>
            <person name="Komiyama M."/>
            <person name="Tashiro H."/>
            <person name="Tanigami A."/>
            <person name="Fujiwara T."/>
            <person name="Ono T."/>
            <person name="Yamada K."/>
            <person name="Fujii Y."/>
            <person name="Ozaki K."/>
            <person name="Hirao M."/>
            <person name="Ohmori Y."/>
            <person name="Kawabata A."/>
            <person name="Hikiji T."/>
            <person name="Kobatake N."/>
            <person name="Inagaki H."/>
            <person name="Ikema Y."/>
            <person name="Okamoto S."/>
            <person name="Okitani R."/>
            <person name="Kawakami T."/>
            <person name="Noguchi S."/>
            <person name="Itoh T."/>
            <person name="Shigeta K."/>
            <person name="Senba T."/>
            <person name="Matsumura K."/>
            <person name="Nakajima Y."/>
            <person name="Mizuno T."/>
            <person name="Morinaga M."/>
            <person name="Sasaki M."/>
            <person name="Togashi T."/>
            <person name="Oyama M."/>
            <person name="Hata H."/>
            <person name="Watanabe M."/>
            <person name="Komatsu T."/>
            <person name="Mizushima-Sugano J."/>
            <person name="Satoh T."/>
            <person name="Shirai Y."/>
            <person name="Takahashi Y."/>
            <person name="Nakagawa K."/>
            <person name="Okumura K."/>
            <person name="Nagase T."/>
            <person name="Nomura N."/>
            <person name="Kikuchi H."/>
            <person name="Masuho Y."/>
            <person name="Yamashita R."/>
            <person name="Nakai K."/>
            <person name="Yada T."/>
            <person name="Nakamura Y."/>
            <person name="Ohara O."/>
            <person name="Isogai T."/>
            <person name="Sugano S."/>
        </authorList>
    </citation>
    <scope>NUCLEOTIDE SEQUENCE [LARGE SCALE MRNA] (ISOFORM 1)</scope>
    <source>
        <tissue>Urinary bladder</tissue>
    </source>
</reference>
<reference key="11">
    <citation type="journal article" date="2007" name="BMC Genomics">
        <title>The full-ORF clone resource of the German cDNA consortium.</title>
        <authorList>
            <person name="Bechtel S."/>
            <person name="Rosenfelder H."/>
            <person name="Duda A."/>
            <person name="Schmidt C.P."/>
            <person name="Ernst U."/>
            <person name="Wellenreuther R."/>
            <person name="Mehrle A."/>
            <person name="Schuster C."/>
            <person name="Bahr A."/>
            <person name="Bloecker H."/>
            <person name="Heubner D."/>
            <person name="Hoerlein A."/>
            <person name="Michel G."/>
            <person name="Wedler H."/>
            <person name="Koehrer K."/>
            <person name="Ottenwaelder B."/>
            <person name="Poustka A."/>
            <person name="Wiemann S."/>
            <person name="Schupp I."/>
        </authorList>
    </citation>
    <scope>NUCLEOTIDE SEQUENCE [LARGE SCALE MRNA] (ISOFORM 1)</scope>
    <source>
        <tissue>Retina</tissue>
    </source>
</reference>
<reference evidence="41" key="12">
    <citation type="journal article" date="2006" name="Nature">
        <title>The DNA sequence and biological annotation of human chromosome 1.</title>
        <authorList>
            <person name="Gregory S.G."/>
            <person name="Barlow K.F."/>
            <person name="McLay K.E."/>
            <person name="Kaul R."/>
            <person name="Swarbreck D."/>
            <person name="Dunham A."/>
            <person name="Scott C.E."/>
            <person name="Howe K.L."/>
            <person name="Woodfine K."/>
            <person name="Spencer C.C.A."/>
            <person name="Jones M.C."/>
            <person name="Gillson C."/>
            <person name="Searle S."/>
            <person name="Zhou Y."/>
            <person name="Kokocinski F."/>
            <person name="McDonald L."/>
            <person name="Evans R."/>
            <person name="Phillips K."/>
            <person name="Atkinson A."/>
            <person name="Cooper R."/>
            <person name="Jones C."/>
            <person name="Hall R.E."/>
            <person name="Andrews T.D."/>
            <person name="Lloyd C."/>
            <person name="Ainscough R."/>
            <person name="Almeida J.P."/>
            <person name="Ambrose K.D."/>
            <person name="Anderson F."/>
            <person name="Andrew R.W."/>
            <person name="Ashwell R.I.S."/>
            <person name="Aubin K."/>
            <person name="Babbage A.K."/>
            <person name="Bagguley C.L."/>
            <person name="Bailey J."/>
            <person name="Beasley H."/>
            <person name="Bethel G."/>
            <person name="Bird C.P."/>
            <person name="Bray-Allen S."/>
            <person name="Brown J.Y."/>
            <person name="Brown A.J."/>
            <person name="Buckley D."/>
            <person name="Burton J."/>
            <person name="Bye J."/>
            <person name="Carder C."/>
            <person name="Chapman J.C."/>
            <person name="Clark S.Y."/>
            <person name="Clarke G."/>
            <person name="Clee C."/>
            <person name="Cobley V."/>
            <person name="Collier R.E."/>
            <person name="Corby N."/>
            <person name="Coville G.J."/>
            <person name="Davies J."/>
            <person name="Deadman R."/>
            <person name="Dunn M."/>
            <person name="Earthrowl M."/>
            <person name="Ellington A.G."/>
            <person name="Errington H."/>
            <person name="Frankish A."/>
            <person name="Frankland J."/>
            <person name="French L."/>
            <person name="Garner P."/>
            <person name="Garnett J."/>
            <person name="Gay L."/>
            <person name="Ghori M.R.J."/>
            <person name="Gibson R."/>
            <person name="Gilby L.M."/>
            <person name="Gillett W."/>
            <person name="Glithero R.J."/>
            <person name="Grafham D.V."/>
            <person name="Griffiths C."/>
            <person name="Griffiths-Jones S."/>
            <person name="Grocock R."/>
            <person name="Hammond S."/>
            <person name="Harrison E.S.I."/>
            <person name="Hart E."/>
            <person name="Haugen E."/>
            <person name="Heath P.D."/>
            <person name="Holmes S."/>
            <person name="Holt K."/>
            <person name="Howden P.J."/>
            <person name="Hunt A.R."/>
            <person name="Hunt S.E."/>
            <person name="Hunter G."/>
            <person name="Isherwood J."/>
            <person name="James R."/>
            <person name="Johnson C."/>
            <person name="Johnson D."/>
            <person name="Joy A."/>
            <person name="Kay M."/>
            <person name="Kershaw J.K."/>
            <person name="Kibukawa M."/>
            <person name="Kimberley A.M."/>
            <person name="King A."/>
            <person name="Knights A.J."/>
            <person name="Lad H."/>
            <person name="Laird G."/>
            <person name="Lawlor S."/>
            <person name="Leongamornlert D.A."/>
            <person name="Lloyd D.M."/>
            <person name="Loveland J."/>
            <person name="Lovell J."/>
            <person name="Lush M.J."/>
            <person name="Lyne R."/>
            <person name="Martin S."/>
            <person name="Mashreghi-Mohammadi M."/>
            <person name="Matthews L."/>
            <person name="Matthews N.S.W."/>
            <person name="McLaren S."/>
            <person name="Milne S."/>
            <person name="Mistry S."/>
            <person name="Moore M.J.F."/>
            <person name="Nickerson T."/>
            <person name="O'Dell C.N."/>
            <person name="Oliver K."/>
            <person name="Palmeiri A."/>
            <person name="Palmer S.A."/>
            <person name="Parker A."/>
            <person name="Patel D."/>
            <person name="Pearce A.V."/>
            <person name="Peck A.I."/>
            <person name="Pelan S."/>
            <person name="Phelps K."/>
            <person name="Phillimore B.J."/>
            <person name="Plumb R."/>
            <person name="Rajan J."/>
            <person name="Raymond C."/>
            <person name="Rouse G."/>
            <person name="Saenphimmachak C."/>
            <person name="Sehra H.K."/>
            <person name="Sheridan E."/>
            <person name="Shownkeen R."/>
            <person name="Sims S."/>
            <person name="Skuce C.D."/>
            <person name="Smith M."/>
            <person name="Steward C."/>
            <person name="Subramanian S."/>
            <person name="Sycamore N."/>
            <person name="Tracey A."/>
            <person name="Tromans A."/>
            <person name="Van Helmond Z."/>
            <person name="Wall M."/>
            <person name="Wallis J.M."/>
            <person name="White S."/>
            <person name="Whitehead S.L."/>
            <person name="Wilkinson J.E."/>
            <person name="Willey D.L."/>
            <person name="Williams H."/>
            <person name="Wilming L."/>
            <person name="Wray P.W."/>
            <person name="Wu Z."/>
            <person name="Coulson A."/>
            <person name="Vaudin M."/>
            <person name="Sulston J.E."/>
            <person name="Durbin R.M."/>
            <person name="Hubbard T."/>
            <person name="Wooster R."/>
            <person name="Dunham I."/>
            <person name="Carter N.P."/>
            <person name="McVean G."/>
            <person name="Ross M.T."/>
            <person name="Harrow J."/>
            <person name="Olson M.V."/>
            <person name="Beck S."/>
            <person name="Rogers J."/>
            <person name="Bentley D.R."/>
        </authorList>
    </citation>
    <scope>NUCLEOTIDE SEQUENCE [LARGE SCALE GENOMIC DNA]</scope>
</reference>
<reference evidence="32 43" key="13">
    <citation type="submission" date="2005-07" db="EMBL/GenBank/DDBJ databases">
        <authorList>
            <person name="Mural R.J."/>
            <person name="Istrail S."/>
            <person name="Sutton G.G."/>
            <person name="Florea L."/>
            <person name="Halpern A.L."/>
            <person name="Mobarry C.M."/>
            <person name="Lippert R."/>
            <person name="Walenz B."/>
            <person name="Shatkay H."/>
            <person name="Dew I."/>
            <person name="Miller J.R."/>
            <person name="Flanigan M.J."/>
            <person name="Edwards N.J."/>
            <person name="Bolanos R."/>
            <person name="Fasulo D."/>
            <person name="Halldorsson B.V."/>
            <person name="Hannenhalli S."/>
            <person name="Turner R."/>
            <person name="Yooseph S."/>
            <person name="Lu F."/>
            <person name="Nusskern D.R."/>
            <person name="Shue B.C."/>
            <person name="Zheng X.H."/>
            <person name="Zhong F."/>
            <person name="Delcher A.L."/>
            <person name="Huson D.H."/>
            <person name="Kravitz S.A."/>
            <person name="Mouchard L."/>
            <person name="Reinert K."/>
            <person name="Remington K.A."/>
            <person name="Clark A.G."/>
            <person name="Waterman M.S."/>
            <person name="Eichler E.E."/>
            <person name="Adams M.D."/>
            <person name="Hunkapiller M.W."/>
            <person name="Myers E.W."/>
            <person name="Venter J.C."/>
        </authorList>
    </citation>
    <scope>NUCLEOTIDE SEQUENCE [LARGE SCALE GENOMIC DNA]</scope>
</reference>
<reference evidence="32 39" key="14">
    <citation type="journal article" date="2004" name="Genome Res.">
        <title>The status, quality, and expansion of the NIH full-length cDNA project: the Mammalian Gene Collection (MGC).</title>
        <authorList>
            <consortium name="The MGC Project Team"/>
        </authorList>
    </citation>
    <scope>NUCLEOTIDE SEQUENCE [LARGE SCALE MRNA] (ISOFORM 1)</scope>
    <source>
        <tissue evidence="39">Lung</tissue>
    </source>
</reference>
<reference evidence="32" key="15">
    <citation type="journal article" date="2000" name="Oncogene">
        <title>Over-expression of ERT(ESX/ESE-1/ELF3), an ets-related transcription factor, induces endogenous TGF-beta type II receptor expression and restores the TGF-beta signaling pathway in Hs578t human breast cancer cells.</title>
        <authorList>
            <person name="Chang J."/>
            <person name="Lee C."/>
            <person name="Hahm K.-B."/>
            <person name="Yi Y."/>
            <person name="Choi S.-G."/>
            <person name="Kim S.-J."/>
        </authorList>
    </citation>
    <scope>FUNCTION</scope>
</reference>
<reference evidence="32" key="16">
    <citation type="journal article" date="2000" name="Oncogene">
        <title>Dual function of the epithelial specific ets transcription factor, ELF3, in modulating differentiation.</title>
        <authorList>
            <person name="Brembeck F.H."/>
            <person name="Opitz O.G."/>
            <person name="Libermann T.A."/>
            <person name="Rustgi A.K."/>
        </authorList>
    </citation>
    <scope>FUNCTION</scope>
    <scope>MUTAGENESIS OF 247-ARG--PRO-250; TRP-315; LYS-319 AND 334-ARG--TYR-337</scope>
</reference>
<reference evidence="32" key="17">
    <citation type="journal article" date="2001" name="J. Biol. Chem.">
        <title>ESE-1 is a novel transcriptional mediator of inflammation that interacts with NF-kappa B to regulate the inducible nitric-oxide synthase gene.</title>
        <authorList>
            <person name="Rudders S."/>
            <person name="Gaspar J."/>
            <person name="Madore R."/>
            <person name="Voland C."/>
            <person name="Grall F."/>
            <person name="Patel A."/>
            <person name="Pellacani A."/>
            <person name="Perrella M.A."/>
            <person name="Libermann T.A."/>
            <person name="Oettgen P."/>
        </authorList>
    </citation>
    <scope>FUNCTION</scope>
</reference>
<reference evidence="32" key="18">
    <citation type="journal article" date="2001" name="Oncogene">
        <title>Sequence-specific enhancer binding protein is responsible for the differential expression of ERT/ESX/ELF-3/ESE-1/jen gene in human gastric cancer cell lines: implication for the loss of TGF-beta type II receptor expression.</title>
        <authorList>
            <person name="Park S.H."/>
            <person name="Kim Y.S."/>
            <person name="Park B.-K."/>
            <person name="Hougaard S."/>
            <person name="Kim S.-J."/>
        </authorList>
    </citation>
    <scope>FUNCTION</scope>
</reference>
<reference evidence="32" key="19">
    <citation type="journal article" date="2002" name="Oncogene">
        <title>ErbB2 activation of ESX gene expression.</title>
        <authorList>
            <person name="Neve R.M."/>
            <person name="Ylstra B."/>
            <person name="Chang C.-H."/>
            <person name="Albertson D.G."/>
            <person name="Benz C.C."/>
        </authorList>
    </citation>
    <scope>INDUCTION</scope>
</reference>
<reference evidence="32" key="20">
    <citation type="journal article" date="2003" name="DNA Cell Biol.">
        <title>The epithelial-specific ETS transcription factor ESX/ESE-1/Elf-3 modulates breast cancer-associated gene expression.</title>
        <authorList>
            <person name="Eckel K.L."/>
            <person name="Tentler J.J."/>
            <person name="Cappetta G.J."/>
            <person name="Diamond S.E."/>
            <person name="Gutierrez-Hartmann A."/>
        </authorList>
    </citation>
    <scope>FUNCTION</scope>
</reference>
<reference evidence="32" key="21">
    <citation type="journal article" date="2003" name="J. Biol. Chem.">
        <title>ESE-1, an enterocyte-specific Ets transcription factor, regulates MIP-3alpha gene expression in Caco-2 human colonic epithelial cells.</title>
        <authorList>
            <person name="Kwon J.H."/>
            <person name="Keates S."/>
            <person name="Simeonidis S."/>
            <person name="Grall F."/>
            <person name="Libermann T.A."/>
            <person name="Keates A.C."/>
        </authorList>
    </citation>
    <scope>FUNCTION</scope>
</reference>
<reference evidence="32" key="22">
    <citation type="journal article" date="2003" name="J. Biol. Chem.">
        <title>Distinct functional interactions of human Skn-1 isoforms with Ese-1 during keratinocyte terminal differentiation.</title>
        <authorList>
            <person name="Cabral A."/>
            <person name="Fischer D.F."/>
            <person name="Vermeij W.P."/>
            <person name="Backendorf C."/>
        </authorList>
    </citation>
    <scope>FUNCTION</scope>
    <scope>SUBUNIT</scope>
</reference>
<reference evidence="32" key="23">
    <citation type="journal article" date="2003" name="J. Biol. Chem.">
        <title>Interplay between proximal and distal promoter elements is required for squamous differentiation marker induction in the bronchial epithelium: role for ESE-1, Sp1, and AP-1 proteins.</title>
        <authorList>
            <person name="Reddy S.P.M."/>
            <person name="Vuong H."/>
            <person name="Adiseshaiah P."/>
        </authorList>
    </citation>
    <scope>FUNCTION</scope>
    <scope>INDUCTION</scope>
</reference>
<reference evidence="32" key="24">
    <citation type="journal article" date="2004" name="J. Biol. Chem.">
        <title>ESE-1 is a novel transcriptional mediator of angiopoietin-1 expression in the setting of inflammation.</title>
        <authorList>
            <person name="Brown C."/>
            <person name="Gaspar J."/>
            <person name="Pettit A."/>
            <person name="Lee R."/>
            <person name="Gu X."/>
            <person name="Wang H."/>
            <person name="Manning C."/>
            <person name="Voland C."/>
            <person name="Goldring S.R."/>
            <person name="Goldring M.B."/>
            <person name="Libermann T.A."/>
            <person name="Gravallese E.M."/>
            <person name="Oettgen P."/>
        </authorList>
    </citation>
    <scope>FUNCTION</scope>
</reference>
<reference evidence="32" key="25">
    <citation type="journal article" date="2004" name="J. Biol. Chem.">
        <title>Positive and negative modulation of the transcriptional activity of the ETS factor ESE-1 through interaction with p300, CREB-binding protein, and Ku 70/86.</title>
        <authorList>
            <person name="Wang H."/>
            <person name="Fang R."/>
            <person name="Cho J.-Y."/>
            <person name="Libermann T.A."/>
            <person name="Oettgen P."/>
        </authorList>
    </citation>
    <scope>FUNCTION</scope>
    <scope>INTERACTION WITH CREBBP; EP300; XRCC5 AND XRCC6</scope>
</reference>
<reference evidence="32" key="26">
    <citation type="journal article" date="2004" name="Mol. Cell. Biol.">
        <title>The ETS transcription factor ESE-1 transforms MCF-12A human mammary epithelial cells via a novel cytoplasmic mechanism.</title>
        <authorList>
            <person name="Prescott J.D."/>
            <person name="Koto K.S.N."/>
            <person name="Singh M."/>
            <person name="Gutierrez-Hartmann A."/>
        </authorList>
    </citation>
    <scope>FUNCTION</scope>
    <scope>SUBCELLULAR LOCATION</scope>
</reference>
<reference evidence="32" key="27">
    <citation type="journal article" date="2004" name="Oncogene">
        <title>ESX induces transformation and functional epithelial to mesenchymal transition in MCF-12A mammary epithelial cells.</title>
        <authorList>
            <person name="Schedin P.J."/>
            <person name="Eckel-Mahan K.L."/>
            <person name="McDaniel S.M."/>
            <person name="Prescott J.D."/>
            <person name="Brodsky K.S."/>
            <person name="Tentler J.J."/>
            <person name="Gutierrez-Hartmann A."/>
        </authorList>
    </citation>
    <scope>FUNCTION</scope>
</reference>
<reference evidence="32" key="28">
    <citation type="journal article" date="2005" name="FEBS J.">
        <title>The Ets transcription factor ESE-1 mediates induction of the COX-2 gene by LPS in monocytes.</title>
        <authorList>
            <person name="Grall F.T."/>
            <person name="Prall W.C."/>
            <person name="Wei W."/>
            <person name="Gu X."/>
            <person name="Cho J.-Y."/>
            <person name="Choy B.K."/>
            <person name="Zerbini L.F."/>
            <person name="Inan M.S."/>
            <person name="Goldring S.R."/>
            <person name="Gravallese E.M."/>
            <person name="Goldring M.B."/>
            <person name="Oettgen P."/>
            <person name="Libermann T.A."/>
        </authorList>
    </citation>
    <scope>FUNCTION</scope>
</reference>
<reference evidence="32" key="29">
    <citation type="journal article" date="2006" name="Gene">
        <title>Identification of an epithelial-specific enhancer regulating ESX expression.</title>
        <authorList>
            <person name="Neve R.M."/>
            <person name="Parmar H."/>
            <person name="Amend C."/>
            <person name="Chen C."/>
            <person name="Rizzino A."/>
            <person name="Benz C.C."/>
        </authorList>
    </citation>
    <scope>FUNCTION</scope>
    <scope>INDUCTION</scope>
</reference>
<reference evidence="32" key="30">
    <citation type="journal article" date="2006" name="J. Biol. Chem.">
        <title>Expression of claudin7 is tightly associated with epithelial structures in synovial sarcomas and regulated by an Ets family transcription factor, ELF3.</title>
        <authorList>
            <person name="Kohno Y."/>
            <person name="Okamoto T."/>
            <person name="Ishibe T."/>
            <person name="Nagayama S."/>
            <person name="Shima Y."/>
            <person name="Nishijo K."/>
            <person name="Shibata K.R."/>
            <person name="Fukiage K."/>
            <person name="Otsuka S."/>
            <person name="Uejima D."/>
            <person name="Araki N."/>
            <person name="Naka N."/>
            <person name="Nakashima Y."/>
            <person name="Aoyama T."/>
            <person name="Nakayama T."/>
            <person name="Nakamura T."/>
            <person name="Toguchida J."/>
        </authorList>
    </citation>
    <scope>FUNCTION</scope>
    <scope>SUBUNIT</scope>
    <scope>SUBCELLULAR LOCATION</scope>
</reference>
<reference key="31">
    <citation type="journal article" date="2007" name="Genomics">
        <title>Nine-amino-acid transactivation domain: establishment and prediction utilities.</title>
        <authorList>
            <person name="Piskacek S."/>
            <person name="Gregor M."/>
            <person name="Nemethova M."/>
            <person name="Grabner M."/>
            <person name="Kovarik P."/>
            <person name="Piskacek M."/>
        </authorList>
    </citation>
    <scope>DOMAIN</scope>
</reference>
<reference key="32">
    <citation type="journal article" date="2008" name="Proc. Natl. Acad. Sci. U.S.A.">
        <title>A quantitative atlas of mitotic phosphorylation.</title>
        <authorList>
            <person name="Dephoure N."/>
            <person name="Zhou C."/>
            <person name="Villen J."/>
            <person name="Beausoleil S.A."/>
            <person name="Bakalarski C.E."/>
            <person name="Elledge S.J."/>
            <person name="Gygi S.P."/>
        </authorList>
    </citation>
    <scope>IDENTIFICATION BY MASS SPECTROMETRY [LARGE SCALE ANALYSIS]</scope>
    <source>
        <tissue>Cervix carcinoma</tissue>
    </source>
</reference>
<reference key="33">
    <citation type="journal article" date="2019" name="Nucleic Acids Res.">
        <title>MIR sequences recruit zinc finger protein ZNF768 to expressed genes.</title>
        <authorList>
            <person name="Rohrmoser M."/>
            <person name="Kluge M."/>
            <person name="Yahia Y."/>
            <person name="Gruber-Eber A."/>
            <person name="Maqbool M.A."/>
            <person name="Forne I."/>
            <person name="Krebs S."/>
            <person name="Blum H."/>
            <person name="Greifenberg A.K."/>
            <person name="Geyer M."/>
            <person name="Descostes N."/>
            <person name="Imhof A."/>
            <person name="Andrau J.C."/>
            <person name="Friedel C.C."/>
            <person name="Eick D."/>
        </authorList>
    </citation>
    <scope>INTERACTION WITH ZNF768</scope>
</reference>
<reference evidence="32 43" key="34">
    <citation type="submission" date="2007-07" db="PDB data bank">
        <title>Solution structure of the N-terminal SAM-domain of E74-like factor 3.</title>
        <authorList>
            <consortium name="RIKEN structural genomics initiative (RSGI)"/>
        </authorList>
    </citation>
    <scope>STRUCTURE BY NMR OF 45-132</scope>
</reference>
<name>ELF3_HUMAN</name>
<evidence type="ECO:0000250" key="1"/>
<evidence type="ECO:0000255" key="2"/>
<evidence type="ECO:0000255" key="3">
    <source>
        <dbReference type="PROSITE-ProRule" id="PRU00237"/>
    </source>
</evidence>
<evidence type="ECO:0000255" key="4">
    <source>
        <dbReference type="PROSITE-ProRule" id="PRU00762"/>
    </source>
</evidence>
<evidence type="ECO:0000256" key="5">
    <source>
        <dbReference type="SAM" id="MobiDB-lite"/>
    </source>
</evidence>
<evidence type="ECO:0000269" key="6">
    <source>
    </source>
</evidence>
<evidence type="ECO:0000269" key="7">
    <source>
    </source>
</evidence>
<evidence type="ECO:0000269" key="8">
    <source>
    </source>
</evidence>
<evidence type="ECO:0000269" key="9">
    <source>
    </source>
</evidence>
<evidence type="ECO:0000269" key="10">
    <source>
    </source>
</evidence>
<evidence type="ECO:0000269" key="11">
    <source>
    </source>
</evidence>
<evidence type="ECO:0000269" key="12">
    <source>
    </source>
</evidence>
<evidence type="ECO:0000269" key="13">
    <source>
    </source>
</evidence>
<evidence type="ECO:0000269" key="14">
    <source>
    </source>
</evidence>
<evidence type="ECO:0000269" key="15">
    <source>
    </source>
</evidence>
<evidence type="ECO:0000269" key="16">
    <source>
    </source>
</evidence>
<evidence type="ECO:0000269" key="17">
    <source>
    </source>
</evidence>
<evidence type="ECO:0000269" key="18">
    <source>
    </source>
</evidence>
<evidence type="ECO:0000269" key="19">
    <source>
    </source>
</evidence>
<evidence type="ECO:0000269" key="20">
    <source>
    </source>
</evidence>
<evidence type="ECO:0000269" key="21">
    <source>
    </source>
</evidence>
<evidence type="ECO:0000269" key="22">
    <source>
    </source>
</evidence>
<evidence type="ECO:0000269" key="23">
    <source>
    </source>
</evidence>
<evidence type="ECO:0000269" key="24">
    <source>
    </source>
</evidence>
<evidence type="ECO:0000269" key="25">
    <source>
    </source>
</evidence>
<evidence type="ECO:0000269" key="26">
    <source>
    </source>
</evidence>
<evidence type="ECO:0000269" key="27">
    <source>
    </source>
</evidence>
<evidence type="ECO:0000269" key="28">
    <source>
    </source>
</evidence>
<evidence type="ECO:0000269" key="29">
    <source>
    </source>
</evidence>
<evidence type="ECO:0000269" key="30">
    <source>
    </source>
</evidence>
<evidence type="ECO:0000303" key="31">
    <source>
    </source>
</evidence>
<evidence type="ECO:0000305" key="32"/>
<evidence type="ECO:0000312" key="33">
    <source>
        <dbReference type="EMBL" id="AAB58075.1"/>
    </source>
</evidence>
<evidence type="ECO:0000312" key="34">
    <source>
        <dbReference type="EMBL" id="AAB65823.1"/>
    </source>
</evidence>
<evidence type="ECO:0000312" key="35">
    <source>
        <dbReference type="EMBL" id="AAB67238.1"/>
    </source>
</evidence>
<evidence type="ECO:0000312" key="36">
    <source>
        <dbReference type="EMBL" id="AAB96586.1"/>
    </source>
</evidence>
<evidence type="ECO:0000312" key="37">
    <source>
        <dbReference type="EMBL" id="AAC51884.1"/>
    </source>
</evidence>
<evidence type="ECO:0000312" key="38">
    <source>
        <dbReference type="EMBL" id="AAD45237.1"/>
    </source>
</evidence>
<evidence type="ECO:0000312" key="39">
    <source>
        <dbReference type="EMBL" id="AAH03569.1"/>
    </source>
</evidence>
<evidence type="ECO:0000312" key="40">
    <source>
        <dbReference type="EMBL" id="AAM70481.1"/>
    </source>
</evidence>
<evidence type="ECO:0000312" key="41">
    <source>
        <dbReference type="EMBL" id="AL691482"/>
    </source>
</evidence>
<evidence type="ECO:0000312" key="42">
    <source>
        <dbReference type="EMBL" id="CAD29859.1"/>
    </source>
</evidence>
<evidence type="ECO:0000312" key="43">
    <source>
        <dbReference type="EMBL" id="CAD97611.1"/>
    </source>
</evidence>
<evidence type="ECO:0000312" key="44">
    <source>
        <dbReference type="HGNC" id="HGNC:3318"/>
    </source>
</evidence>
<evidence type="ECO:0007829" key="45">
    <source>
        <dbReference type="PDB" id="2E8P"/>
    </source>
</evidence>